<name>MENG_PARUW</name>
<accession>Q6MCB5</accession>
<organism>
    <name type="scientific">Protochlamydia amoebophila (strain UWE25)</name>
    <dbReference type="NCBI Taxonomy" id="264201"/>
    <lineage>
        <taxon>Bacteria</taxon>
        <taxon>Pseudomonadati</taxon>
        <taxon>Chlamydiota</taxon>
        <taxon>Chlamydiia</taxon>
        <taxon>Parachlamydiales</taxon>
        <taxon>Parachlamydiaceae</taxon>
        <taxon>Candidatus Protochlamydia</taxon>
    </lineage>
</organism>
<sequence length="242" mass="27301">MSTYNKNRPQTIQIMFNSIAKQYDRTNAVLSFCLHRRWNLELVKKVQSQQTSHTLLDLCAGTGDVAFSYLNQVSAPCQAYLVDFSSEMLACAEEKAKSFGKTPHSFQYVLADVQRLPFSNQTMDCATMAYGIRNIHHPLQSLQETYRVLKPGGCLGILELTRPENKFLQIGHQLYLKTLLPLLGKWLTANENAYQYLRKSIHTFIPPGELEELVKTAGFINTGRYSLAGGIATIITGFKPMK</sequence>
<proteinExistence type="inferred from homology"/>
<keyword id="KW-0474">Menaquinone biosynthesis</keyword>
<keyword id="KW-0489">Methyltransferase</keyword>
<keyword id="KW-1185">Reference proteome</keyword>
<keyword id="KW-0949">S-adenosyl-L-methionine</keyword>
<keyword id="KW-0808">Transferase</keyword>
<feature type="chain" id="PRO_0000193305" description="Demethylmenaquinone methyltransferase">
    <location>
        <begin position="1"/>
        <end position="242"/>
    </location>
</feature>
<feature type="binding site" evidence="1">
    <location>
        <position position="62"/>
    </location>
    <ligand>
        <name>S-adenosyl-L-methionine</name>
        <dbReference type="ChEBI" id="CHEBI:59789"/>
    </ligand>
</feature>
<feature type="binding site" evidence="1">
    <location>
        <position position="83"/>
    </location>
    <ligand>
        <name>S-adenosyl-L-methionine</name>
        <dbReference type="ChEBI" id="CHEBI:59789"/>
    </ligand>
</feature>
<feature type="binding site" evidence="1">
    <location>
        <begin position="112"/>
        <end position="113"/>
    </location>
    <ligand>
        <name>S-adenosyl-L-methionine</name>
        <dbReference type="ChEBI" id="CHEBI:59789"/>
    </ligand>
</feature>
<gene>
    <name evidence="1" type="primary">menG</name>
    <name type="ordered locus">pc1060</name>
</gene>
<evidence type="ECO:0000255" key="1">
    <source>
        <dbReference type="HAMAP-Rule" id="MF_01813"/>
    </source>
</evidence>
<comment type="function">
    <text evidence="1">Methyltransferase required for the conversion of demethylmenaquinol (DMKH2) to menaquinol (MKH2).</text>
</comment>
<comment type="catalytic activity">
    <reaction evidence="1">
        <text>a 2-demethylmenaquinol + S-adenosyl-L-methionine = a menaquinol + S-adenosyl-L-homocysteine + H(+)</text>
        <dbReference type="Rhea" id="RHEA:42640"/>
        <dbReference type="Rhea" id="RHEA-COMP:9539"/>
        <dbReference type="Rhea" id="RHEA-COMP:9563"/>
        <dbReference type="ChEBI" id="CHEBI:15378"/>
        <dbReference type="ChEBI" id="CHEBI:18151"/>
        <dbReference type="ChEBI" id="CHEBI:55437"/>
        <dbReference type="ChEBI" id="CHEBI:57856"/>
        <dbReference type="ChEBI" id="CHEBI:59789"/>
        <dbReference type="EC" id="2.1.1.163"/>
    </reaction>
</comment>
<comment type="pathway">
    <text evidence="1">Quinol/quinone metabolism; menaquinone biosynthesis; menaquinol from 1,4-dihydroxy-2-naphthoate: step 2/2.</text>
</comment>
<comment type="similarity">
    <text evidence="1">Belongs to the class I-like SAM-binding methyltransferase superfamily. MenG/UbiE family.</text>
</comment>
<reference key="1">
    <citation type="journal article" date="2004" name="Science">
        <title>Illuminating the evolutionary history of chlamydiae.</title>
        <authorList>
            <person name="Horn M."/>
            <person name="Collingro A."/>
            <person name="Schmitz-Esser S."/>
            <person name="Beier C.L."/>
            <person name="Purkhold U."/>
            <person name="Fartmann B."/>
            <person name="Brandt P."/>
            <person name="Nyakatura G.J."/>
            <person name="Droege M."/>
            <person name="Frishman D."/>
            <person name="Rattei T."/>
            <person name="Mewes H.-W."/>
            <person name="Wagner M."/>
        </authorList>
    </citation>
    <scope>NUCLEOTIDE SEQUENCE [LARGE SCALE GENOMIC DNA]</scope>
    <source>
        <strain>UWE25</strain>
    </source>
</reference>
<dbReference type="EC" id="2.1.1.163" evidence="1"/>
<dbReference type="EMBL" id="BX908798">
    <property type="protein sequence ID" value="CAF23784.1"/>
    <property type="molecule type" value="Genomic_DNA"/>
</dbReference>
<dbReference type="RefSeq" id="WP_011175610.1">
    <property type="nucleotide sequence ID" value="NC_005861.2"/>
</dbReference>
<dbReference type="SMR" id="Q6MCB5"/>
<dbReference type="STRING" id="264201.pc1060"/>
<dbReference type="KEGG" id="pcu:PC_RS05105"/>
<dbReference type="eggNOG" id="COG2226">
    <property type="taxonomic scope" value="Bacteria"/>
</dbReference>
<dbReference type="HOGENOM" id="CLU_037990_0_0_0"/>
<dbReference type="OrthoDB" id="9808140at2"/>
<dbReference type="UniPathway" id="UPA00079">
    <property type="reaction ID" value="UER00169"/>
</dbReference>
<dbReference type="Proteomes" id="UP000000529">
    <property type="component" value="Chromosome"/>
</dbReference>
<dbReference type="GO" id="GO:0043770">
    <property type="term" value="F:demethylmenaquinone methyltransferase activity"/>
    <property type="evidence" value="ECO:0007669"/>
    <property type="project" value="UniProtKB-UniRule"/>
</dbReference>
<dbReference type="GO" id="GO:0009234">
    <property type="term" value="P:menaquinone biosynthetic process"/>
    <property type="evidence" value="ECO:0007669"/>
    <property type="project" value="UniProtKB-UniRule"/>
</dbReference>
<dbReference type="GO" id="GO:0032259">
    <property type="term" value="P:methylation"/>
    <property type="evidence" value="ECO:0007669"/>
    <property type="project" value="UniProtKB-KW"/>
</dbReference>
<dbReference type="CDD" id="cd02440">
    <property type="entry name" value="AdoMet_MTases"/>
    <property type="match status" value="1"/>
</dbReference>
<dbReference type="Gene3D" id="3.40.50.150">
    <property type="entry name" value="Vaccinia Virus protein VP39"/>
    <property type="match status" value="1"/>
</dbReference>
<dbReference type="HAMAP" id="MF_01813">
    <property type="entry name" value="MenG_UbiE_methyltr"/>
    <property type="match status" value="1"/>
</dbReference>
<dbReference type="InterPro" id="IPR029063">
    <property type="entry name" value="SAM-dependent_MTases_sf"/>
</dbReference>
<dbReference type="InterPro" id="IPR004033">
    <property type="entry name" value="UbiE/COQ5_MeTrFase"/>
</dbReference>
<dbReference type="InterPro" id="IPR023576">
    <property type="entry name" value="UbiE/COQ5_MeTrFase_CS"/>
</dbReference>
<dbReference type="NCBIfam" id="TIGR01934">
    <property type="entry name" value="MenG_MenH_UbiE"/>
    <property type="match status" value="1"/>
</dbReference>
<dbReference type="NCBIfam" id="NF001244">
    <property type="entry name" value="PRK00216.1-5"/>
    <property type="match status" value="1"/>
</dbReference>
<dbReference type="PANTHER" id="PTHR43591:SF24">
    <property type="entry name" value="2-METHOXY-6-POLYPRENYL-1,4-BENZOQUINOL METHYLASE, MITOCHONDRIAL"/>
    <property type="match status" value="1"/>
</dbReference>
<dbReference type="PANTHER" id="PTHR43591">
    <property type="entry name" value="METHYLTRANSFERASE"/>
    <property type="match status" value="1"/>
</dbReference>
<dbReference type="Pfam" id="PF01209">
    <property type="entry name" value="Ubie_methyltran"/>
    <property type="match status" value="1"/>
</dbReference>
<dbReference type="SUPFAM" id="SSF53335">
    <property type="entry name" value="S-adenosyl-L-methionine-dependent methyltransferases"/>
    <property type="match status" value="1"/>
</dbReference>
<dbReference type="PROSITE" id="PS51608">
    <property type="entry name" value="SAM_MT_UBIE"/>
    <property type="match status" value="1"/>
</dbReference>
<dbReference type="PROSITE" id="PS01183">
    <property type="entry name" value="UBIE_1"/>
    <property type="match status" value="1"/>
</dbReference>
<dbReference type="PROSITE" id="PS01184">
    <property type="entry name" value="UBIE_2"/>
    <property type="match status" value="1"/>
</dbReference>
<protein>
    <recommendedName>
        <fullName evidence="1">Demethylmenaquinone methyltransferase</fullName>
        <ecNumber evidence="1">2.1.1.163</ecNumber>
    </recommendedName>
</protein>